<proteinExistence type="inferred from homology"/>
<accession>B7MZL0</accession>
<keyword id="KW-0413">Isomerase</keyword>
<comment type="function">
    <text evidence="1">Catalyzes the reversible conversion of ribose-5-phosphate to ribulose 5-phosphate.</text>
</comment>
<comment type="catalytic activity">
    <reaction evidence="1">
        <text>aldehydo-D-ribose 5-phosphate = D-ribulose 5-phosphate</text>
        <dbReference type="Rhea" id="RHEA:14657"/>
        <dbReference type="ChEBI" id="CHEBI:58121"/>
        <dbReference type="ChEBI" id="CHEBI:58273"/>
        <dbReference type="EC" id="5.3.1.6"/>
    </reaction>
</comment>
<comment type="pathway">
    <text evidence="1">Carbohydrate degradation; pentose phosphate pathway; D-ribose 5-phosphate from D-ribulose 5-phosphate (non-oxidative stage): step 1/1.</text>
</comment>
<comment type="subunit">
    <text evidence="1">Homodimer.</text>
</comment>
<comment type="similarity">
    <text evidence="1">Belongs to the ribose 5-phosphate isomerase family.</text>
</comment>
<sequence length="219" mass="22860">MTQDELKKAVGWAALQYVQPGTIVGVGTGSTAAHFIDALGTMKGQIEGAVSSSDASTEKLKSLGIHVFDLNEVDSLGIYVDGADEINGHMQMIKGGGAALTREKIIASVAEKFICIADASKQVDILGKFPLPVEVIPMARSAVARQLVKLGGRPEYRQGVVTDNGNVILDVHGMEILDPIAMENAINAIPGVVTVGLFANRGADVALIGTPDGVKTIVK</sequence>
<feature type="chain" id="PRO_1000194709" description="Ribose-5-phosphate isomerase A">
    <location>
        <begin position="1"/>
        <end position="219"/>
    </location>
</feature>
<feature type="active site" description="Proton acceptor" evidence="1">
    <location>
        <position position="103"/>
    </location>
</feature>
<feature type="binding site" evidence="1">
    <location>
        <begin position="28"/>
        <end position="31"/>
    </location>
    <ligand>
        <name>substrate</name>
    </ligand>
</feature>
<feature type="binding site" evidence="1">
    <location>
        <begin position="81"/>
        <end position="84"/>
    </location>
    <ligand>
        <name>substrate</name>
    </ligand>
</feature>
<feature type="binding site" evidence="1">
    <location>
        <begin position="94"/>
        <end position="97"/>
    </location>
    <ligand>
        <name>substrate</name>
    </ligand>
</feature>
<feature type="binding site" evidence="1">
    <location>
        <position position="121"/>
    </location>
    <ligand>
        <name>substrate</name>
    </ligand>
</feature>
<reference key="1">
    <citation type="journal article" date="2009" name="PLoS Genet.">
        <title>Organised genome dynamics in the Escherichia coli species results in highly diverse adaptive paths.</title>
        <authorList>
            <person name="Touchon M."/>
            <person name="Hoede C."/>
            <person name="Tenaillon O."/>
            <person name="Barbe V."/>
            <person name="Baeriswyl S."/>
            <person name="Bidet P."/>
            <person name="Bingen E."/>
            <person name="Bonacorsi S."/>
            <person name="Bouchier C."/>
            <person name="Bouvet O."/>
            <person name="Calteau A."/>
            <person name="Chiapello H."/>
            <person name="Clermont O."/>
            <person name="Cruveiller S."/>
            <person name="Danchin A."/>
            <person name="Diard M."/>
            <person name="Dossat C."/>
            <person name="Karoui M.E."/>
            <person name="Frapy E."/>
            <person name="Garry L."/>
            <person name="Ghigo J.M."/>
            <person name="Gilles A.M."/>
            <person name="Johnson J."/>
            <person name="Le Bouguenec C."/>
            <person name="Lescat M."/>
            <person name="Mangenot S."/>
            <person name="Martinez-Jehanne V."/>
            <person name="Matic I."/>
            <person name="Nassif X."/>
            <person name="Oztas S."/>
            <person name="Petit M.A."/>
            <person name="Pichon C."/>
            <person name="Rouy Z."/>
            <person name="Ruf C.S."/>
            <person name="Schneider D."/>
            <person name="Tourret J."/>
            <person name="Vacherie B."/>
            <person name="Vallenet D."/>
            <person name="Medigue C."/>
            <person name="Rocha E.P.C."/>
            <person name="Denamur E."/>
        </authorList>
    </citation>
    <scope>NUCLEOTIDE SEQUENCE [LARGE SCALE GENOMIC DNA]</scope>
    <source>
        <strain>ED1a</strain>
    </source>
</reference>
<gene>
    <name evidence="1" type="primary">rpiA</name>
    <name type="ordered locus">ECED1_3372</name>
</gene>
<dbReference type="EC" id="5.3.1.6" evidence="1"/>
<dbReference type="EMBL" id="CU928162">
    <property type="protein sequence ID" value="CAR09528.2"/>
    <property type="molecule type" value="Genomic_DNA"/>
</dbReference>
<dbReference type="RefSeq" id="WP_000189743.1">
    <property type="nucleotide sequence ID" value="NC_011745.1"/>
</dbReference>
<dbReference type="SMR" id="B7MZL0"/>
<dbReference type="GeneID" id="93779085"/>
<dbReference type="KEGG" id="ecq:ECED1_3372"/>
<dbReference type="HOGENOM" id="CLU_056590_1_1_6"/>
<dbReference type="UniPathway" id="UPA00115">
    <property type="reaction ID" value="UER00412"/>
</dbReference>
<dbReference type="Proteomes" id="UP000000748">
    <property type="component" value="Chromosome"/>
</dbReference>
<dbReference type="GO" id="GO:0005829">
    <property type="term" value="C:cytosol"/>
    <property type="evidence" value="ECO:0007669"/>
    <property type="project" value="TreeGrafter"/>
</dbReference>
<dbReference type="GO" id="GO:0004751">
    <property type="term" value="F:ribose-5-phosphate isomerase activity"/>
    <property type="evidence" value="ECO:0007669"/>
    <property type="project" value="UniProtKB-UniRule"/>
</dbReference>
<dbReference type="GO" id="GO:0006014">
    <property type="term" value="P:D-ribose metabolic process"/>
    <property type="evidence" value="ECO:0007669"/>
    <property type="project" value="TreeGrafter"/>
</dbReference>
<dbReference type="GO" id="GO:0009052">
    <property type="term" value="P:pentose-phosphate shunt, non-oxidative branch"/>
    <property type="evidence" value="ECO:0007669"/>
    <property type="project" value="UniProtKB-UniRule"/>
</dbReference>
<dbReference type="CDD" id="cd01398">
    <property type="entry name" value="RPI_A"/>
    <property type="match status" value="1"/>
</dbReference>
<dbReference type="FunFam" id="3.30.70.260:FF:000004">
    <property type="entry name" value="Ribose-5-phosphate isomerase A"/>
    <property type="match status" value="1"/>
</dbReference>
<dbReference type="FunFam" id="3.40.50.1360:FF:000001">
    <property type="entry name" value="Ribose-5-phosphate isomerase A"/>
    <property type="match status" value="1"/>
</dbReference>
<dbReference type="Gene3D" id="3.30.70.260">
    <property type="match status" value="1"/>
</dbReference>
<dbReference type="Gene3D" id="3.40.50.1360">
    <property type="match status" value="1"/>
</dbReference>
<dbReference type="HAMAP" id="MF_00170">
    <property type="entry name" value="Rib_5P_isom_A"/>
    <property type="match status" value="1"/>
</dbReference>
<dbReference type="InterPro" id="IPR037171">
    <property type="entry name" value="NagB/RpiA_transferase-like"/>
</dbReference>
<dbReference type="InterPro" id="IPR020672">
    <property type="entry name" value="Ribose5P_isomerase_typA_subgr"/>
</dbReference>
<dbReference type="InterPro" id="IPR004788">
    <property type="entry name" value="Ribose5P_isomerase_type_A"/>
</dbReference>
<dbReference type="NCBIfam" id="NF001924">
    <property type="entry name" value="PRK00702.1"/>
    <property type="match status" value="1"/>
</dbReference>
<dbReference type="NCBIfam" id="TIGR00021">
    <property type="entry name" value="rpiA"/>
    <property type="match status" value="1"/>
</dbReference>
<dbReference type="PANTHER" id="PTHR11934">
    <property type="entry name" value="RIBOSE-5-PHOSPHATE ISOMERASE"/>
    <property type="match status" value="1"/>
</dbReference>
<dbReference type="PANTHER" id="PTHR11934:SF0">
    <property type="entry name" value="RIBOSE-5-PHOSPHATE ISOMERASE"/>
    <property type="match status" value="1"/>
</dbReference>
<dbReference type="Pfam" id="PF06026">
    <property type="entry name" value="Rib_5-P_isom_A"/>
    <property type="match status" value="1"/>
</dbReference>
<dbReference type="SUPFAM" id="SSF75445">
    <property type="entry name" value="D-ribose-5-phosphate isomerase (RpiA), lid domain"/>
    <property type="match status" value="1"/>
</dbReference>
<dbReference type="SUPFAM" id="SSF100950">
    <property type="entry name" value="NagB/RpiA/CoA transferase-like"/>
    <property type="match status" value="1"/>
</dbReference>
<protein>
    <recommendedName>
        <fullName evidence="1">Ribose-5-phosphate isomerase A</fullName>
        <ecNumber evidence="1">5.3.1.6</ecNumber>
    </recommendedName>
    <alternativeName>
        <fullName evidence="1">Phosphoriboisomerase A</fullName>
        <shortName evidence="1">PRI</shortName>
    </alternativeName>
</protein>
<name>RPIA_ECO81</name>
<evidence type="ECO:0000255" key="1">
    <source>
        <dbReference type="HAMAP-Rule" id="MF_00170"/>
    </source>
</evidence>
<organism>
    <name type="scientific">Escherichia coli O81 (strain ED1a)</name>
    <dbReference type="NCBI Taxonomy" id="585397"/>
    <lineage>
        <taxon>Bacteria</taxon>
        <taxon>Pseudomonadati</taxon>
        <taxon>Pseudomonadota</taxon>
        <taxon>Gammaproteobacteria</taxon>
        <taxon>Enterobacterales</taxon>
        <taxon>Enterobacteriaceae</taxon>
        <taxon>Escherichia</taxon>
    </lineage>
</organism>